<protein>
    <recommendedName>
        <fullName>WD repeat domain-containing protein 83 homolog</fullName>
    </recommendedName>
    <alternativeName>
        <fullName>Mitogen-activated protein kinase organizer 1 homolog</fullName>
        <shortName>MAPK organizer 1 homolog</shortName>
    </alternativeName>
</protein>
<accession>Q54H44</accession>
<comment type="function">
    <text evidence="1">Molecular scaffold protein for various multimeric protein complexes. Acts as a module in the assembly of a multicomponent scaffold for the ERK pathway, linking ERK responses to specific agonists. Also involved in response to hypoxia (By similarity).</text>
</comment>
<comment type="subcellular location">
    <subcellularLocation>
        <location evidence="1">Cytoplasm</location>
    </subcellularLocation>
</comment>
<comment type="similarity">
    <text evidence="3">Belongs to the WD repeat MORG1 family.</text>
</comment>
<dbReference type="EMBL" id="AAFI02000148">
    <property type="protein sequence ID" value="EAL62567.1"/>
    <property type="molecule type" value="Genomic_DNA"/>
</dbReference>
<dbReference type="RefSeq" id="XP_636074.1">
    <property type="nucleotide sequence ID" value="XM_630982.1"/>
</dbReference>
<dbReference type="SMR" id="Q54H44"/>
<dbReference type="FunCoup" id="Q54H44">
    <property type="interactions" value="119"/>
</dbReference>
<dbReference type="STRING" id="44689.Q54H44"/>
<dbReference type="PaxDb" id="44689-DDB0233741"/>
<dbReference type="EnsemblProtists" id="EAL62567">
    <property type="protein sequence ID" value="EAL62567"/>
    <property type="gene ID" value="DDB_G0289711"/>
</dbReference>
<dbReference type="GeneID" id="8627284"/>
<dbReference type="KEGG" id="ddi:DDB_G0289711"/>
<dbReference type="dictyBase" id="DDB_G0289711">
    <property type="gene designation" value="morg1"/>
</dbReference>
<dbReference type="VEuPathDB" id="AmoebaDB:DDB_G0289711"/>
<dbReference type="eggNOG" id="KOG0316">
    <property type="taxonomic scope" value="Eukaryota"/>
</dbReference>
<dbReference type="HOGENOM" id="CLU_000288_57_1_1"/>
<dbReference type="InParanoid" id="Q54H44"/>
<dbReference type="OMA" id="MCWDIRT"/>
<dbReference type="PhylomeDB" id="Q54H44"/>
<dbReference type="Reactome" id="R-DDI-5674135">
    <property type="pathway name" value="MAP2K and MAPK activation"/>
</dbReference>
<dbReference type="PRO" id="PR:Q54H44"/>
<dbReference type="Proteomes" id="UP000002195">
    <property type="component" value="Chromosome 5"/>
</dbReference>
<dbReference type="GO" id="GO:0071013">
    <property type="term" value="C:catalytic step 2 spliceosome"/>
    <property type="evidence" value="ECO:0000318"/>
    <property type="project" value="GO_Central"/>
</dbReference>
<dbReference type="GO" id="GO:0005737">
    <property type="term" value="C:cytoplasm"/>
    <property type="evidence" value="ECO:0000250"/>
    <property type="project" value="UniProtKB"/>
</dbReference>
<dbReference type="GO" id="GO:0000398">
    <property type="term" value="P:mRNA splicing, via spliceosome"/>
    <property type="evidence" value="ECO:0000318"/>
    <property type="project" value="GO_Central"/>
</dbReference>
<dbReference type="CDD" id="cd00200">
    <property type="entry name" value="WD40"/>
    <property type="match status" value="1"/>
</dbReference>
<dbReference type="Gene3D" id="2.130.10.10">
    <property type="entry name" value="YVTN repeat-like/Quinoprotein amine dehydrogenase"/>
    <property type="match status" value="2"/>
</dbReference>
<dbReference type="InterPro" id="IPR020472">
    <property type="entry name" value="G-protein_beta_WD-40_rep"/>
</dbReference>
<dbReference type="InterPro" id="IPR015943">
    <property type="entry name" value="WD40/YVTN_repeat-like_dom_sf"/>
</dbReference>
<dbReference type="InterPro" id="IPR019775">
    <property type="entry name" value="WD40_repeat_CS"/>
</dbReference>
<dbReference type="InterPro" id="IPR036322">
    <property type="entry name" value="WD40_repeat_dom_sf"/>
</dbReference>
<dbReference type="InterPro" id="IPR001680">
    <property type="entry name" value="WD40_rpt"/>
</dbReference>
<dbReference type="InterPro" id="IPR051980">
    <property type="entry name" value="WD_repeat_MORG1"/>
</dbReference>
<dbReference type="PANTHER" id="PTHR22842:SF3">
    <property type="entry name" value="WD REPEAT DOMAIN-CONTAINING PROTEIN 83"/>
    <property type="match status" value="1"/>
</dbReference>
<dbReference type="PANTHER" id="PTHR22842">
    <property type="entry name" value="WD40 REPEAT PROTEIN"/>
    <property type="match status" value="1"/>
</dbReference>
<dbReference type="Pfam" id="PF00400">
    <property type="entry name" value="WD40"/>
    <property type="match status" value="5"/>
</dbReference>
<dbReference type="PRINTS" id="PR00320">
    <property type="entry name" value="GPROTEINBRPT"/>
</dbReference>
<dbReference type="SMART" id="SM00320">
    <property type="entry name" value="WD40"/>
    <property type="match status" value="7"/>
</dbReference>
<dbReference type="SUPFAM" id="SSF50978">
    <property type="entry name" value="WD40 repeat-like"/>
    <property type="match status" value="1"/>
</dbReference>
<dbReference type="PROSITE" id="PS00678">
    <property type="entry name" value="WD_REPEATS_1"/>
    <property type="match status" value="1"/>
</dbReference>
<dbReference type="PROSITE" id="PS50082">
    <property type="entry name" value="WD_REPEATS_2"/>
    <property type="match status" value="3"/>
</dbReference>
<dbReference type="PROSITE" id="PS50294">
    <property type="entry name" value="WD_REPEATS_REGION"/>
    <property type="match status" value="1"/>
</dbReference>
<gene>
    <name type="primary">morg1</name>
    <name type="ORF">DDB_G0289711</name>
</gene>
<organism>
    <name type="scientific">Dictyostelium discoideum</name>
    <name type="common">Social amoeba</name>
    <dbReference type="NCBI Taxonomy" id="44689"/>
    <lineage>
        <taxon>Eukaryota</taxon>
        <taxon>Amoebozoa</taxon>
        <taxon>Evosea</taxon>
        <taxon>Eumycetozoa</taxon>
        <taxon>Dictyostelia</taxon>
        <taxon>Dictyosteliales</taxon>
        <taxon>Dictyosteliaceae</taxon>
        <taxon>Dictyostelium</taxon>
    </lineage>
</organism>
<reference key="1">
    <citation type="journal article" date="2005" name="Nature">
        <title>The genome of the social amoeba Dictyostelium discoideum.</title>
        <authorList>
            <person name="Eichinger L."/>
            <person name="Pachebat J.A."/>
            <person name="Gloeckner G."/>
            <person name="Rajandream M.A."/>
            <person name="Sucgang R."/>
            <person name="Berriman M."/>
            <person name="Song J."/>
            <person name="Olsen R."/>
            <person name="Szafranski K."/>
            <person name="Xu Q."/>
            <person name="Tunggal B."/>
            <person name="Kummerfeld S."/>
            <person name="Madera M."/>
            <person name="Konfortov B.A."/>
            <person name="Rivero F."/>
            <person name="Bankier A.T."/>
            <person name="Lehmann R."/>
            <person name="Hamlin N."/>
            <person name="Davies R."/>
            <person name="Gaudet P."/>
            <person name="Fey P."/>
            <person name="Pilcher K."/>
            <person name="Chen G."/>
            <person name="Saunders D."/>
            <person name="Sodergren E.J."/>
            <person name="Davis P."/>
            <person name="Kerhornou A."/>
            <person name="Nie X."/>
            <person name="Hall N."/>
            <person name="Anjard C."/>
            <person name="Hemphill L."/>
            <person name="Bason N."/>
            <person name="Farbrother P."/>
            <person name="Desany B."/>
            <person name="Just E."/>
            <person name="Morio T."/>
            <person name="Rost R."/>
            <person name="Churcher C.M."/>
            <person name="Cooper J."/>
            <person name="Haydock S."/>
            <person name="van Driessche N."/>
            <person name="Cronin A."/>
            <person name="Goodhead I."/>
            <person name="Muzny D.M."/>
            <person name="Mourier T."/>
            <person name="Pain A."/>
            <person name="Lu M."/>
            <person name="Harper D."/>
            <person name="Lindsay R."/>
            <person name="Hauser H."/>
            <person name="James K.D."/>
            <person name="Quiles M."/>
            <person name="Madan Babu M."/>
            <person name="Saito T."/>
            <person name="Buchrieser C."/>
            <person name="Wardroper A."/>
            <person name="Felder M."/>
            <person name="Thangavelu M."/>
            <person name="Johnson D."/>
            <person name="Knights A."/>
            <person name="Loulseged H."/>
            <person name="Mungall K.L."/>
            <person name="Oliver K."/>
            <person name="Price C."/>
            <person name="Quail M.A."/>
            <person name="Urushihara H."/>
            <person name="Hernandez J."/>
            <person name="Rabbinowitsch E."/>
            <person name="Steffen D."/>
            <person name="Sanders M."/>
            <person name="Ma J."/>
            <person name="Kohara Y."/>
            <person name="Sharp S."/>
            <person name="Simmonds M.N."/>
            <person name="Spiegler S."/>
            <person name="Tivey A."/>
            <person name="Sugano S."/>
            <person name="White B."/>
            <person name="Walker D."/>
            <person name="Woodward J.R."/>
            <person name="Winckler T."/>
            <person name="Tanaka Y."/>
            <person name="Shaulsky G."/>
            <person name="Schleicher M."/>
            <person name="Weinstock G.M."/>
            <person name="Rosenthal A."/>
            <person name="Cox E.C."/>
            <person name="Chisholm R.L."/>
            <person name="Gibbs R.A."/>
            <person name="Loomis W.F."/>
            <person name="Platzer M."/>
            <person name="Kay R.R."/>
            <person name="Williams J.G."/>
            <person name="Dear P.H."/>
            <person name="Noegel A.A."/>
            <person name="Barrell B.G."/>
            <person name="Kuspa A."/>
        </authorList>
    </citation>
    <scope>NUCLEOTIDE SEQUENCE [LARGE SCALE GENOMIC DNA]</scope>
    <source>
        <strain>AX4</strain>
    </source>
</reference>
<keyword id="KW-0963">Cytoplasm</keyword>
<keyword id="KW-1185">Reference proteome</keyword>
<keyword id="KW-0677">Repeat</keyword>
<keyword id="KW-0853">WD repeat</keyword>
<feature type="chain" id="PRO_0000328182" description="WD repeat domain-containing protein 83 homolog">
    <location>
        <begin position="1"/>
        <end position="325"/>
    </location>
</feature>
<feature type="repeat" description="WD 1">
    <location>
        <begin position="12"/>
        <end position="51"/>
    </location>
</feature>
<feature type="repeat" description="WD 2">
    <location>
        <begin position="54"/>
        <end position="94"/>
    </location>
</feature>
<feature type="repeat" description="WD 3">
    <location>
        <begin position="96"/>
        <end position="135"/>
    </location>
</feature>
<feature type="repeat" description="WD 4">
    <location>
        <begin position="166"/>
        <end position="205"/>
    </location>
</feature>
<feature type="repeat" description="WD 5">
    <location>
        <begin position="206"/>
        <end position="245"/>
    </location>
</feature>
<feature type="repeat" description="WD 6">
    <location>
        <begin position="248"/>
        <end position="291"/>
    </location>
</feature>
<feature type="repeat" description="WD 7">
    <location>
        <begin position="292"/>
        <end position="325"/>
    </location>
</feature>
<feature type="region of interest" description="Disordered" evidence="2">
    <location>
        <begin position="157"/>
        <end position="179"/>
    </location>
</feature>
<proteinExistence type="inferred from homology"/>
<sequence>MVKISCNKVLSNHSGSVTVVKYNSDGGYCLSGSSDKSIKLYNVSKGSMIHSFEEHGYGIGDLVSTSDNKQLFSCAEKQLYQWDIASGQVIRRFQNAHNDTITSVCVNLDSTLLFSGSSDRLVKAWDLRTKSINPVQILDDAKDTITSIIVNEQTITHNHSHGHGHSHGNNNNNQPHTHTQKEVITSSVDGCIRTYDVRMGTLVTYEDTIPISSVSITKDKKCFIASCTDETVKLIDIDSYETLKEYKGHKNKVYKINSCSNFDDSLIISGSEDNDFYIYELLSGKLLSKLSGHSNIITHVDSHPSKNQFITSSTDCTIRIWDQSE</sequence>
<name>WDR83_DICDI</name>
<evidence type="ECO:0000250" key="1"/>
<evidence type="ECO:0000256" key="2">
    <source>
        <dbReference type="SAM" id="MobiDB-lite"/>
    </source>
</evidence>
<evidence type="ECO:0000305" key="3"/>